<accession>Q8QGQ8</accession>
<gene>
    <name type="primary">PER2</name>
</gene>
<sequence length="1344" mass="147942">MDCIEVRGFYSSTEEQNPEQQADISENISSLFSLKEQQKMSEYSGLASNHSQMIAEDSEIQPKPEHSPEVLQEDIEMSSGSSGNDFSGNETNENYSSGHDSHGHESDENGKDSAMLMESSDCHKSSSSNAFSLMIANSEHNQSSSGCSSEQSTKAKTQKELLKTLQELKAHLPAEKRIKGKSSVLTTLKYALKSIKQVKANEEYYQLLMINESQPSGLNVSSYTVEEVETITSEYIMKNADMFAVAVSLITGKIVYISDQAAAILRCKRSYFKNAKFVELLAPQDVSVFYTSTTPYRLPSWNICSRAESSTQDCMEEKSFFCRISAGKERENEICYHPFRMTPYLIKVQDPEVAEDQLCCVLLAEKVHSGYEAPRIPPDKRIFTTTHTPTCLFQDVDERAVPLLGYLPQDLIGTPVLVHLHPNDRPLMLAIHKKILQYGGQPFDYSPIRFCTRNGDYITMDTSWSSFINPWSRKVSFIIGRHKVRTGPLNEDVFAAPNYTEDRILHPSVQEITEQIYRLLLQPVHNSGSSGYGSLGSNGSHEHLMSVASSSDSTGNNNDDTQKDKTISQDARKVKTKGQHIFTENKGKLEYKREPSAEKQNGPGGQVKDVIGKDTTATAAPKNVATEELAWKEQPVYSYQQISCLDSVIRYLESCNVPGTAKRKCEPSSSVNSSVHEQKASVNAIQPLGDSTVLKSSGKSSGPPVVGAHLTSLALPGKPESVVSLTSQCSYSSTIVHVGDKKPQPELEMIEDGPSGAEVLDTQLPAPPPSSTHVNQEKESFKKLGLTKEVLAVHTQKEEQSFLNKFKEIKRFNIFQSHCNYYLQDKPKGRPGERGGRGQRNGTSGMDQPWKKSGKNRKSKRIKPQESSDSTTSGTKFPHRFPLQGLNTTAWSPSDTSQASYSAMSFPTVMPAYPLPVFPAAAGTVPPAPETSVSGFNQLPDSGNTCSMQPSQFSAPLMTPVVALVLPNYVYPEMNNSLPQTLYHSQANFPTHPAFSSQTVFPAQPPFTTPSPFPQQAFFPMQPFHYNPPAEIEKVPVTETRNEPSRSCTPQSVGPQDQASPPLFQSRCSSPLNLLQLEENTKTVESGAPAGLHGALNEEGTIGKIMTTDAGSGKGSLPAESPMDAQNSDALSMSSVLLDILLQEDACSGTGSASSGSGVSAAAESLGSGSNGCDMSGSRTGSSETSHTSKYFGSIDSSENHHKTKMKAEIEESEHFIKYVLQDPIWLLMANTDDTVMMTYQLPSRDLETVLKEDKLKLKQMQKLQPKFTEDQKRELIEVHPWIQQGGLPKTVANSECIFCEDNIQSNFYTSYDEEIHEMDLNEMIEDSGENNLVPLSQVNEEQT</sequence>
<proteinExistence type="evidence at transcript level"/>
<reference key="1">
    <citation type="journal article" date="2001" name="Genes Cells">
        <title>Chicken pineal clock genes: implication of BMAL2 as a bidirectional regulator in circadian clock oscillation.</title>
        <authorList>
            <person name="Okano T."/>
            <person name="Yamamoto K."/>
            <person name="Okano K."/>
            <person name="Hirota T."/>
            <person name="Kasahara T."/>
            <person name="Sasaki M."/>
            <person name="Takanaka Y."/>
            <person name="Fukada Y."/>
        </authorList>
    </citation>
    <scope>NUCLEOTIDE SEQUENCE [MRNA]</scope>
    <scope>FUNCTION</scope>
    <scope>INDUCTION</scope>
    <source>
        <tissue>Pineal gland</tissue>
    </source>
</reference>
<keyword id="KW-0090">Biological rhythms</keyword>
<keyword id="KW-0963">Cytoplasm</keyword>
<keyword id="KW-0539">Nucleus</keyword>
<keyword id="KW-1185">Reference proteome</keyword>
<keyword id="KW-0677">Repeat</keyword>
<keyword id="KW-0804">Transcription</keyword>
<keyword id="KW-0805">Transcription regulation</keyword>
<feature type="chain" id="PRO_0000261154" description="Period circadian protein homolog 2">
    <location>
        <begin position="1"/>
        <end position="1344"/>
    </location>
</feature>
<feature type="domain" description="PAS 1" evidence="3">
    <location>
        <begin position="231"/>
        <end position="298"/>
    </location>
</feature>
<feature type="domain" description="PAS 2" evidence="3">
    <location>
        <begin position="371"/>
        <end position="437"/>
    </location>
</feature>
<feature type="domain" description="PAC">
    <location>
        <begin position="445"/>
        <end position="488"/>
    </location>
</feature>
<feature type="region of interest" description="Disordered" evidence="4">
    <location>
        <begin position="1"/>
        <end position="21"/>
    </location>
</feature>
<feature type="region of interest" description="Disordered" evidence="4">
    <location>
        <begin position="42"/>
        <end position="112"/>
    </location>
</feature>
<feature type="region of interest" description="Disordered" evidence="4">
    <location>
        <begin position="531"/>
        <end position="609"/>
    </location>
</feature>
<feature type="region of interest" description="Disordered" evidence="4">
    <location>
        <begin position="661"/>
        <end position="686"/>
    </location>
</feature>
<feature type="region of interest" description="Disordered" evidence="4">
    <location>
        <begin position="823"/>
        <end position="894"/>
    </location>
</feature>
<feature type="region of interest" description="Disordered" evidence="4">
    <location>
        <begin position="1038"/>
        <end position="1065"/>
    </location>
</feature>
<feature type="region of interest" description="Disordered" evidence="4">
    <location>
        <begin position="1107"/>
        <end position="1126"/>
    </location>
</feature>
<feature type="region of interest" description="Disordered" evidence="4">
    <location>
        <begin position="1149"/>
        <end position="1197"/>
    </location>
</feature>
<feature type="region of interest" description="CRY binding domain" evidence="2">
    <location>
        <begin position="1244"/>
        <end position="1344"/>
    </location>
</feature>
<feature type="short sequence motif" description="Nuclear export signal 1" evidence="1">
    <location>
        <begin position="161"/>
        <end position="170"/>
    </location>
</feature>
<feature type="short sequence motif" description="LXXLL">
    <location>
        <begin position="358"/>
        <end position="362"/>
    </location>
</feature>
<feature type="short sequence motif" description="Nuclear export signal 2" evidence="1">
    <location>
        <begin position="512"/>
        <end position="521"/>
    </location>
</feature>
<feature type="short sequence motif" description="Nuclear localization signal" evidence="1">
    <location>
        <begin position="851"/>
        <end position="865"/>
    </location>
</feature>
<feature type="short sequence motif" description="LXXLL">
    <location>
        <begin position="1138"/>
        <end position="1142"/>
    </location>
</feature>
<feature type="compositionally biased region" description="Polar residues" evidence="4">
    <location>
        <begin position="10"/>
        <end position="21"/>
    </location>
</feature>
<feature type="compositionally biased region" description="Low complexity" evidence="4">
    <location>
        <begin position="78"/>
        <end position="89"/>
    </location>
</feature>
<feature type="compositionally biased region" description="Basic and acidic residues" evidence="4">
    <location>
        <begin position="99"/>
        <end position="111"/>
    </location>
</feature>
<feature type="compositionally biased region" description="Low complexity" evidence="4">
    <location>
        <begin position="549"/>
        <end position="559"/>
    </location>
</feature>
<feature type="compositionally biased region" description="Basic and acidic residues" evidence="4">
    <location>
        <begin position="560"/>
        <end position="573"/>
    </location>
</feature>
<feature type="compositionally biased region" description="Basic and acidic residues" evidence="4">
    <location>
        <begin position="583"/>
        <end position="597"/>
    </location>
</feature>
<feature type="compositionally biased region" description="Polar residues" evidence="4">
    <location>
        <begin position="667"/>
        <end position="684"/>
    </location>
</feature>
<feature type="compositionally biased region" description="Basic and acidic residues" evidence="4">
    <location>
        <begin position="825"/>
        <end position="836"/>
    </location>
</feature>
<feature type="compositionally biased region" description="Basic residues" evidence="4">
    <location>
        <begin position="852"/>
        <end position="862"/>
    </location>
</feature>
<feature type="compositionally biased region" description="Polar residues" evidence="4">
    <location>
        <begin position="865"/>
        <end position="875"/>
    </location>
</feature>
<feature type="compositionally biased region" description="Polar residues" evidence="4">
    <location>
        <begin position="885"/>
        <end position="894"/>
    </location>
</feature>
<feature type="compositionally biased region" description="Polar residues" evidence="4">
    <location>
        <begin position="1045"/>
        <end position="1059"/>
    </location>
</feature>
<feature type="compositionally biased region" description="Low complexity" evidence="4">
    <location>
        <begin position="1149"/>
        <end position="1172"/>
    </location>
</feature>
<feature type="compositionally biased region" description="Polar residues" evidence="4">
    <location>
        <begin position="1177"/>
        <end position="1197"/>
    </location>
</feature>
<comment type="function">
    <text evidence="1 5">Transcriptional repressor which forms a core component of the circadian clock. The circadian clock, an internal time-keeping system, regulates various physiological processes through the generation of approximately 24 hour circadian rhythms in gene expression, which are translated into rhythms in metabolism and behavior. It is derived from the Latin roots 'circa' (about) and 'diem' (day) and acts as an important regulator of a wide array of physiological functions including metabolism, sleep, body temperature, blood pressure, endocrine, immune, cardiovascular, and renal function. Consists of two major components: the central clock, residing in the suprachiasmatic nucleus (SCN) of the brain, and the peripheral clocks that are present in nearly every tissue and organ system. Both the central and peripheral clocks can be reset by environmental cues, also known as Zeitgebers (German for 'timegivers'). The predominant Zeitgeber for the central clock is light, which is sensed by retina and signals directly to the SCN. The central clock entrains the peripheral clocks through neuronal and hormonal signals, body temperature and feeding-related cues, aligning all clocks with the external light/dark cycle. Circadian rhythms allow an organism to achieve temporal homeostasis with its environment at the molecular level by regulating gene expression to create a peak of protein expression once every 24 hours to control when a particular physiological process is most active with respect to the solar day. Transcription and translation of core clock components (CLOCK, NPAS2, BMAL1, BMAL2, PER1, PER2, PER3, CRY1 and CRY2) plays a critical role in rhythm generation, whereas delays imposed by post-translational modifications (PTMs) are important for determining the period (tau) of the rhythms (tau refers to the period of a rhythm and is the length, in time, of one complete cycle). A diurnal rhythm is synchronized with the day/night cycle, while the ultradian and infradian rhythms have a period shorter and longer than 24 hours, respectively. Disruptions in the circadian rhythms contribute to the pathology of cardiovascular diseases, cancer, metabolic syndrome and aging. A transcription/translation feedback loop (TTFL) forms the core of the molecular circadian clock mechanism. Transcription factors, CLOCK or NPAS2 and BMAL1 or BMAL2, form the positive limb of the feedback loop, act in the form of a heterodimer and activate the transcription of core clock genes and clock-controlled genes (involved in key metabolic processes), harboring E-box elements (5'-CACGTG-3') within their promoters. The core clock genes: PER1/2/3 and CRY1/2 which are transcriptional repressors form the negative limb of the feedback loop and interact with the CLOCK|NPAS2-BMAL1|BMAL2 heterodimer inhibiting its activity and thereby negatively regulating their own expression. This heterodimer also activates nuclear receptors NR1D1/2 and RORA/B/G, which form a second feedback loop and which activate and repress BMAL1 transcription, respectively. PER1 and PER2 proteins transport CRY1 and CRY2 into the nucleus with appropriate circadian timing, but also contribute directly to repression of clock-controlled target genes through interaction with several classes of RNA-binding proteins, helicases and others transcriptional repressors. PER appears to regulate circadian control of transcription by at least three different modes. First, interacts directly with the CLOCK-BMAL1 at the tail end of the nascent transcript peak to recruit complexes containing the SIN3-HDAC that remodel chromatin to repress transcription. Second, brings H3K9 methyltransferases such as SUV39H1 and SUV39H2 to the E-box elements of the circadian target genes, like PER2 itself or PER1. The recruitment of each repressive modifier to the DNA seems to be very precisely temporally orchestrated by the large PER complex, the deacetylases acting before than the methyltransferases. Additionally, large PER complexes are also recruited to the target genes 3' termination site through interactions with RNA-binding proteins and helicases that may play a role in transcription termination to regulate transcription independently of CLOCK-BMAL1 interactions (By similarity).</text>
</comment>
<comment type="subunit">
    <text evidence="1">Component of the circadian clock oscillator which includes the CRY proteins, CLOCK or NPAS2, BMAL1 or BMAL2, CSNK1E, and the PER proteins. Interacts directly with PER3, and through a C-terminal domain, with CRY1 and CRY2.</text>
</comment>
<comment type="subcellular location">
    <subcellularLocation>
        <location evidence="1">Nucleus</location>
    </subcellularLocation>
    <subcellularLocation>
        <location evidence="1">Cytoplasm</location>
    </subcellularLocation>
    <text evidence="1">Mainly nuclear. Nucleocytoplasmic shuttling is effected by interaction with other circadian core oscillator proteins and/or by phosphorylation. Retention of PER1 in the cytoplasm occurs through PER1-PER2 heterodimer formation or by interaction with CSNK1E and/or phosphorylation which appears to mask the PER1 nuclear localization signal. Also translocated to the nucleus by CRY1 or CRY2 (By similarity).</text>
</comment>
<comment type="induction">
    <text evidence="5">Exhibits circadian rhythm expression. Peak levels in early morning and low levels at early night.</text>
</comment>
<protein>
    <recommendedName>
        <fullName>Period circadian protein homolog 2</fullName>
        <shortName>cPER2</shortName>
    </recommendedName>
    <alternativeName>
        <fullName>Circadian clock protein PERIOD 2</fullName>
    </alternativeName>
</protein>
<organism>
    <name type="scientific">Gallus gallus</name>
    <name type="common">Chicken</name>
    <dbReference type="NCBI Taxonomy" id="9031"/>
    <lineage>
        <taxon>Eukaryota</taxon>
        <taxon>Metazoa</taxon>
        <taxon>Chordata</taxon>
        <taxon>Craniata</taxon>
        <taxon>Vertebrata</taxon>
        <taxon>Euteleostomi</taxon>
        <taxon>Archelosauria</taxon>
        <taxon>Archosauria</taxon>
        <taxon>Dinosauria</taxon>
        <taxon>Saurischia</taxon>
        <taxon>Theropoda</taxon>
        <taxon>Coelurosauria</taxon>
        <taxon>Aves</taxon>
        <taxon>Neognathae</taxon>
        <taxon>Galloanserae</taxon>
        <taxon>Galliformes</taxon>
        <taxon>Phasianidae</taxon>
        <taxon>Phasianinae</taxon>
        <taxon>Gallus</taxon>
    </lineage>
</organism>
<name>PER2_CHICK</name>
<dbReference type="EMBL" id="AF246956">
    <property type="protein sequence ID" value="AAL98705.1"/>
    <property type="molecule type" value="mRNA"/>
</dbReference>
<dbReference type="RefSeq" id="NP_989593.1">
    <property type="nucleotide sequence ID" value="NM_204262.1"/>
</dbReference>
<dbReference type="SMR" id="Q8QGQ8"/>
<dbReference type="FunCoup" id="Q8QGQ8">
    <property type="interactions" value="195"/>
</dbReference>
<dbReference type="STRING" id="9031.ENSGALP00000047397"/>
<dbReference type="PaxDb" id="9031-ENSGALP00000008844"/>
<dbReference type="GeneID" id="374116"/>
<dbReference type="KEGG" id="gga:374116"/>
<dbReference type="CTD" id="8864"/>
<dbReference type="VEuPathDB" id="HostDB:geneid_374116"/>
<dbReference type="eggNOG" id="KOG3753">
    <property type="taxonomic scope" value="Eukaryota"/>
</dbReference>
<dbReference type="InParanoid" id="Q8QGQ8"/>
<dbReference type="OrthoDB" id="7788983at2759"/>
<dbReference type="PhylomeDB" id="Q8QGQ8"/>
<dbReference type="PRO" id="PR:Q8QGQ8"/>
<dbReference type="Proteomes" id="UP000000539">
    <property type="component" value="Unassembled WGS sequence"/>
</dbReference>
<dbReference type="GO" id="GO:0005737">
    <property type="term" value="C:cytoplasm"/>
    <property type="evidence" value="ECO:0000318"/>
    <property type="project" value="GO_Central"/>
</dbReference>
<dbReference type="GO" id="GO:0005634">
    <property type="term" value="C:nucleus"/>
    <property type="evidence" value="ECO:0000318"/>
    <property type="project" value="GO_Central"/>
</dbReference>
<dbReference type="GO" id="GO:0000976">
    <property type="term" value="F:transcription cis-regulatory region binding"/>
    <property type="evidence" value="ECO:0000318"/>
    <property type="project" value="GO_Central"/>
</dbReference>
<dbReference type="GO" id="GO:0001222">
    <property type="term" value="F:transcription corepressor binding"/>
    <property type="evidence" value="ECO:0000318"/>
    <property type="project" value="GO_Central"/>
</dbReference>
<dbReference type="GO" id="GO:0032922">
    <property type="term" value="P:circadian regulation of gene expression"/>
    <property type="evidence" value="ECO:0000318"/>
    <property type="project" value="GO_Central"/>
</dbReference>
<dbReference type="GO" id="GO:0007623">
    <property type="term" value="P:circadian rhythm"/>
    <property type="evidence" value="ECO:0000314"/>
    <property type="project" value="UniProtKB"/>
</dbReference>
<dbReference type="GO" id="GO:0043153">
    <property type="term" value="P:entrainment of circadian clock by photoperiod"/>
    <property type="evidence" value="ECO:0000318"/>
    <property type="project" value="GO_Central"/>
</dbReference>
<dbReference type="GO" id="GO:0000122">
    <property type="term" value="P:negative regulation of transcription by RNA polymerase II"/>
    <property type="evidence" value="ECO:0000318"/>
    <property type="project" value="GO_Central"/>
</dbReference>
<dbReference type="CDD" id="cd00130">
    <property type="entry name" value="PAS"/>
    <property type="match status" value="1"/>
</dbReference>
<dbReference type="FunFam" id="3.30.450.20:FF:000013">
    <property type="entry name" value="Period circadian protein homolog 2"/>
    <property type="match status" value="1"/>
</dbReference>
<dbReference type="FunFam" id="3.30.450.20:FF:000004">
    <property type="entry name" value="Period circadian protein homolog 3"/>
    <property type="match status" value="1"/>
</dbReference>
<dbReference type="Gene3D" id="3.30.450.20">
    <property type="entry name" value="PAS domain"/>
    <property type="match status" value="2"/>
</dbReference>
<dbReference type="InterPro" id="IPR000014">
    <property type="entry name" value="PAS"/>
</dbReference>
<dbReference type="InterPro" id="IPR035965">
    <property type="entry name" value="PAS-like_dom_sf"/>
</dbReference>
<dbReference type="InterPro" id="IPR013655">
    <property type="entry name" value="PAS_fold_3"/>
</dbReference>
<dbReference type="InterPro" id="IPR048814">
    <property type="entry name" value="Per1-3_PAS-A"/>
</dbReference>
<dbReference type="InterPro" id="IPR022728">
    <property type="entry name" value="Period_circadian-like_C"/>
</dbReference>
<dbReference type="InterPro" id="IPR050760">
    <property type="entry name" value="Period_circadian_regulator"/>
</dbReference>
<dbReference type="PANTHER" id="PTHR11269">
    <property type="entry name" value="PERIOD CIRCADIAN PROTEIN"/>
    <property type="match status" value="1"/>
</dbReference>
<dbReference type="PANTHER" id="PTHR11269:SF9">
    <property type="entry name" value="PERIOD CIRCADIAN PROTEIN HOMOLOG 2"/>
    <property type="match status" value="1"/>
</dbReference>
<dbReference type="Pfam" id="PF23170">
    <property type="entry name" value="bHLH_PER"/>
    <property type="match status" value="1"/>
</dbReference>
<dbReference type="Pfam" id="PF08447">
    <property type="entry name" value="PAS_3"/>
    <property type="match status" value="1"/>
</dbReference>
<dbReference type="Pfam" id="PF21353">
    <property type="entry name" value="Per3-like_PAS-A"/>
    <property type="match status" value="1"/>
</dbReference>
<dbReference type="Pfam" id="PF12114">
    <property type="entry name" value="Period_C"/>
    <property type="match status" value="1"/>
</dbReference>
<dbReference type="SMART" id="SM00091">
    <property type="entry name" value="PAS"/>
    <property type="match status" value="2"/>
</dbReference>
<dbReference type="SUPFAM" id="SSF55785">
    <property type="entry name" value="PYP-like sensor domain (PAS domain)"/>
    <property type="match status" value="1"/>
</dbReference>
<dbReference type="PROSITE" id="PS50112">
    <property type="entry name" value="PAS"/>
    <property type="match status" value="1"/>
</dbReference>
<evidence type="ECO:0000250" key="1">
    <source>
        <dbReference type="UniProtKB" id="O54943"/>
    </source>
</evidence>
<evidence type="ECO:0000250" key="2">
    <source>
        <dbReference type="UniProtKB" id="Q9Z301"/>
    </source>
</evidence>
<evidence type="ECO:0000255" key="3">
    <source>
        <dbReference type="PROSITE-ProRule" id="PRU00140"/>
    </source>
</evidence>
<evidence type="ECO:0000256" key="4">
    <source>
        <dbReference type="SAM" id="MobiDB-lite"/>
    </source>
</evidence>
<evidence type="ECO:0000269" key="5">
    <source>
    </source>
</evidence>